<feature type="chain" id="PRO_0000176284" description="Elongation factor 4">
    <location>
        <begin position="1"/>
        <end position="612"/>
    </location>
</feature>
<feature type="domain" description="tr-type G">
    <location>
        <begin position="11"/>
        <end position="193"/>
    </location>
</feature>
<feature type="binding site" evidence="1">
    <location>
        <begin position="23"/>
        <end position="28"/>
    </location>
    <ligand>
        <name>GTP</name>
        <dbReference type="ChEBI" id="CHEBI:37565"/>
    </ligand>
</feature>
<feature type="binding site" evidence="1">
    <location>
        <begin position="140"/>
        <end position="143"/>
    </location>
    <ligand>
        <name>GTP</name>
        <dbReference type="ChEBI" id="CHEBI:37565"/>
    </ligand>
</feature>
<reference key="1">
    <citation type="journal article" date="2004" name="Proc. Natl. Acad. Sci. U.S.A.">
        <title>The genome sequence of the probiotic intestinal bacterium Lactobacillus johnsonii NCC 533.</title>
        <authorList>
            <person name="Pridmore R.D."/>
            <person name="Berger B."/>
            <person name="Desiere F."/>
            <person name="Vilanova D."/>
            <person name="Barretto C."/>
            <person name="Pittet A.-C."/>
            <person name="Zwahlen M.-C."/>
            <person name="Rouvet M."/>
            <person name="Altermann E."/>
            <person name="Barrangou R."/>
            <person name="Mollet B."/>
            <person name="Mercenier A."/>
            <person name="Klaenhammer T."/>
            <person name="Arigoni F."/>
            <person name="Schell M.A."/>
        </authorList>
    </citation>
    <scope>NUCLEOTIDE SEQUENCE [LARGE SCALE GENOMIC DNA]</scope>
    <source>
        <strain>CNCM I-1225 / La1 / NCC 533</strain>
    </source>
</reference>
<keyword id="KW-1003">Cell membrane</keyword>
<keyword id="KW-0342">GTP-binding</keyword>
<keyword id="KW-0378">Hydrolase</keyword>
<keyword id="KW-0472">Membrane</keyword>
<keyword id="KW-0547">Nucleotide-binding</keyword>
<keyword id="KW-0648">Protein biosynthesis</keyword>
<accession>P60790</accession>
<sequence>MDIKKLQDYQKHIRNFSIVAHIDHGKSTIADRILELTDTVSERQMKNQLLDDMPLERQRGITIKLNSVEVKYHAKDGETYIFHLIDTPGHVDFSYEVSRSLAACEGALLVVDATQGVQAQTLANTYLAIDDDLEILPVINKIDLPSADPEMCKNEIEEMIGLDASDAVEVSGKTGQGIPELLEEIVKKVPAPDGDLNAPLKALIFDSKYDDYRGVVLSVRIEEGTVKPGDKIRIMNTGKEFEVTEVGVSSPHPVKKDMLIAGDVGYLTANIKSVRETRVGDTITSAETPTEKPLPGYRQIPPMVYSGMYPVDNQKYDDLKEALQKLQLNDAALEFEPETSQALGFGFRCGFLGLLHMDVVQERLEQEFGMDLIMTAPSVDYHAIMNDGSTKLIDNPADLPDAGEYKEVQEPYVKAEIMVPNDFVGPVMELCQRKRGEFVTMDYLDKYRVNVIYNMPLAEIIYDFFDELKSSTKGYASLDYEITGYRATDLVKIDMLLNKEPIDALSFIAHREEAQNRARQMTTMLKKLIPRQNFEVDIQGAIGAKIISRATIKPYRKDVTWKIHTGDPDRRAKLLEKQRRGKKRMKAVGRVEVPQDAFMAVLKMNDDDIKGK</sequence>
<organism>
    <name type="scientific">Lactobacillus johnsonii (strain CNCM I-12250 / La1 / NCC 533)</name>
    <dbReference type="NCBI Taxonomy" id="257314"/>
    <lineage>
        <taxon>Bacteria</taxon>
        <taxon>Bacillati</taxon>
        <taxon>Bacillota</taxon>
        <taxon>Bacilli</taxon>
        <taxon>Lactobacillales</taxon>
        <taxon>Lactobacillaceae</taxon>
        <taxon>Lactobacillus</taxon>
    </lineage>
</organism>
<name>LEPA_LACJO</name>
<evidence type="ECO:0000255" key="1">
    <source>
        <dbReference type="HAMAP-Rule" id="MF_00071"/>
    </source>
</evidence>
<gene>
    <name evidence="1" type="primary">lepA</name>
    <name type="ordered locus">LJ_1477</name>
</gene>
<comment type="function">
    <text evidence="1">Required for accurate and efficient protein synthesis under certain stress conditions. May act as a fidelity factor of the translation reaction, by catalyzing a one-codon backward translocation of tRNAs on improperly translocated ribosomes. Back-translocation proceeds from a post-translocation (POST) complex to a pre-translocation (PRE) complex, thus giving elongation factor G a second chance to translocate the tRNAs correctly. Binds to ribosomes in a GTP-dependent manner.</text>
</comment>
<comment type="catalytic activity">
    <reaction evidence="1">
        <text>GTP + H2O = GDP + phosphate + H(+)</text>
        <dbReference type="Rhea" id="RHEA:19669"/>
        <dbReference type="ChEBI" id="CHEBI:15377"/>
        <dbReference type="ChEBI" id="CHEBI:15378"/>
        <dbReference type="ChEBI" id="CHEBI:37565"/>
        <dbReference type="ChEBI" id="CHEBI:43474"/>
        <dbReference type="ChEBI" id="CHEBI:58189"/>
        <dbReference type="EC" id="3.6.5.n1"/>
    </reaction>
</comment>
<comment type="subcellular location">
    <subcellularLocation>
        <location evidence="1">Cell membrane</location>
        <topology evidence="1">Peripheral membrane protein</topology>
        <orientation evidence="1">Cytoplasmic side</orientation>
    </subcellularLocation>
</comment>
<comment type="similarity">
    <text evidence="1">Belongs to the TRAFAC class translation factor GTPase superfamily. Classic translation factor GTPase family. LepA subfamily.</text>
</comment>
<dbReference type="EC" id="3.6.5.n1" evidence="1"/>
<dbReference type="EMBL" id="AE017198">
    <property type="protein sequence ID" value="AAS09245.1"/>
    <property type="molecule type" value="Genomic_DNA"/>
</dbReference>
<dbReference type="RefSeq" id="WP_004897149.1">
    <property type="nucleotide sequence ID" value="NC_005362.1"/>
</dbReference>
<dbReference type="SMR" id="P60790"/>
<dbReference type="KEGG" id="ljo:LJ_1477"/>
<dbReference type="eggNOG" id="COG0481">
    <property type="taxonomic scope" value="Bacteria"/>
</dbReference>
<dbReference type="HOGENOM" id="CLU_009995_3_3_9"/>
<dbReference type="Proteomes" id="UP000000581">
    <property type="component" value="Chromosome"/>
</dbReference>
<dbReference type="GO" id="GO:0005886">
    <property type="term" value="C:plasma membrane"/>
    <property type="evidence" value="ECO:0007669"/>
    <property type="project" value="UniProtKB-SubCell"/>
</dbReference>
<dbReference type="GO" id="GO:0005525">
    <property type="term" value="F:GTP binding"/>
    <property type="evidence" value="ECO:0007669"/>
    <property type="project" value="UniProtKB-UniRule"/>
</dbReference>
<dbReference type="GO" id="GO:0003924">
    <property type="term" value="F:GTPase activity"/>
    <property type="evidence" value="ECO:0007669"/>
    <property type="project" value="UniProtKB-UniRule"/>
</dbReference>
<dbReference type="GO" id="GO:0043022">
    <property type="term" value="F:ribosome binding"/>
    <property type="evidence" value="ECO:0007669"/>
    <property type="project" value="UniProtKB-UniRule"/>
</dbReference>
<dbReference type="GO" id="GO:0003746">
    <property type="term" value="F:translation elongation factor activity"/>
    <property type="evidence" value="ECO:0007669"/>
    <property type="project" value="UniProtKB-UniRule"/>
</dbReference>
<dbReference type="GO" id="GO:0045727">
    <property type="term" value="P:positive regulation of translation"/>
    <property type="evidence" value="ECO:0007669"/>
    <property type="project" value="UniProtKB-UniRule"/>
</dbReference>
<dbReference type="CDD" id="cd03699">
    <property type="entry name" value="EF4_II"/>
    <property type="match status" value="1"/>
</dbReference>
<dbReference type="CDD" id="cd16260">
    <property type="entry name" value="EF4_III"/>
    <property type="match status" value="1"/>
</dbReference>
<dbReference type="CDD" id="cd01890">
    <property type="entry name" value="LepA"/>
    <property type="match status" value="1"/>
</dbReference>
<dbReference type="CDD" id="cd03709">
    <property type="entry name" value="lepA_C"/>
    <property type="match status" value="1"/>
</dbReference>
<dbReference type="FunFam" id="3.40.50.300:FF:000078">
    <property type="entry name" value="Elongation factor 4"/>
    <property type="match status" value="1"/>
</dbReference>
<dbReference type="FunFam" id="2.40.30.10:FF:000015">
    <property type="entry name" value="Translation factor GUF1, mitochondrial"/>
    <property type="match status" value="1"/>
</dbReference>
<dbReference type="FunFam" id="3.30.70.240:FF:000007">
    <property type="entry name" value="Translation factor GUF1, mitochondrial"/>
    <property type="match status" value="1"/>
</dbReference>
<dbReference type="FunFam" id="3.30.70.2570:FF:000001">
    <property type="entry name" value="Translation factor GUF1, mitochondrial"/>
    <property type="match status" value="1"/>
</dbReference>
<dbReference type="FunFam" id="3.30.70.870:FF:000004">
    <property type="entry name" value="Translation factor GUF1, mitochondrial"/>
    <property type="match status" value="1"/>
</dbReference>
<dbReference type="Gene3D" id="3.30.70.240">
    <property type="match status" value="1"/>
</dbReference>
<dbReference type="Gene3D" id="3.30.70.2570">
    <property type="entry name" value="Elongation factor 4, C-terminal domain"/>
    <property type="match status" value="1"/>
</dbReference>
<dbReference type="Gene3D" id="3.30.70.870">
    <property type="entry name" value="Elongation Factor G (Translational Gtpase), domain 3"/>
    <property type="match status" value="1"/>
</dbReference>
<dbReference type="Gene3D" id="3.40.50.300">
    <property type="entry name" value="P-loop containing nucleotide triphosphate hydrolases"/>
    <property type="match status" value="1"/>
</dbReference>
<dbReference type="Gene3D" id="2.40.30.10">
    <property type="entry name" value="Translation factors"/>
    <property type="match status" value="1"/>
</dbReference>
<dbReference type="HAMAP" id="MF_00071">
    <property type="entry name" value="LepA"/>
    <property type="match status" value="1"/>
</dbReference>
<dbReference type="InterPro" id="IPR006297">
    <property type="entry name" value="EF-4"/>
</dbReference>
<dbReference type="InterPro" id="IPR035647">
    <property type="entry name" value="EFG_III/V"/>
</dbReference>
<dbReference type="InterPro" id="IPR000640">
    <property type="entry name" value="EFG_V-like"/>
</dbReference>
<dbReference type="InterPro" id="IPR004161">
    <property type="entry name" value="EFTu-like_2"/>
</dbReference>
<dbReference type="InterPro" id="IPR038363">
    <property type="entry name" value="LepA_C_sf"/>
</dbReference>
<dbReference type="InterPro" id="IPR013842">
    <property type="entry name" value="LepA_CTD"/>
</dbReference>
<dbReference type="InterPro" id="IPR035654">
    <property type="entry name" value="LepA_IV"/>
</dbReference>
<dbReference type="InterPro" id="IPR027417">
    <property type="entry name" value="P-loop_NTPase"/>
</dbReference>
<dbReference type="InterPro" id="IPR005225">
    <property type="entry name" value="Small_GTP-bd"/>
</dbReference>
<dbReference type="InterPro" id="IPR000795">
    <property type="entry name" value="T_Tr_GTP-bd_dom"/>
</dbReference>
<dbReference type="NCBIfam" id="TIGR01393">
    <property type="entry name" value="lepA"/>
    <property type="match status" value="1"/>
</dbReference>
<dbReference type="NCBIfam" id="TIGR00231">
    <property type="entry name" value="small_GTP"/>
    <property type="match status" value="1"/>
</dbReference>
<dbReference type="PANTHER" id="PTHR43512:SF4">
    <property type="entry name" value="TRANSLATION FACTOR GUF1 HOMOLOG, CHLOROPLASTIC"/>
    <property type="match status" value="1"/>
</dbReference>
<dbReference type="PANTHER" id="PTHR43512">
    <property type="entry name" value="TRANSLATION FACTOR GUF1-RELATED"/>
    <property type="match status" value="1"/>
</dbReference>
<dbReference type="Pfam" id="PF00679">
    <property type="entry name" value="EFG_C"/>
    <property type="match status" value="1"/>
</dbReference>
<dbReference type="Pfam" id="PF00009">
    <property type="entry name" value="GTP_EFTU"/>
    <property type="match status" value="1"/>
</dbReference>
<dbReference type="Pfam" id="PF03144">
    <property type="entry name" value="GTP_EFTU_D2"/>
    <property type="match status" value="1"/>
</dbReference>
<dbReference type="Pfam" id="PF06421">
    <property type="entry name" value="LepA_C"/>
    <property type="match status" value="1"/>
</dbReference>
<dbReference type="PRINTS" id="PR00315">
    <property type="entry name" value="ELONGATNFCT"/>
</dbReference>
<dbReference type="SMART" id="SM00838">
    <property type="entry name" value="EFG_C"/>
    <property type="match status" value="1"/>
</dbReference>
<dbReference type="SUPFAM" id="SSF54980">
    <property type="entry name" value="EF-G C-terminal domain-like"/>
    <property type="match status" value="2"/>
</dbReference>
<dbReference type="SUPFAM" id="SSF52540">
    <property type="entry name" value="P-loop containing nucleoside triphosphate hydrolases"/>
    <property type="match status" value="1"/>
</dbReference>
<dbReference type="PROSITE" id="PS51722">
    <property type="entry name" value="G_TR_2"/>
    <property type="match status" value="1"/>
</dbReference>
<proteinExistence type="inferred from homology"/>
<protein>
    <recommendedName>
        <fullName evidence="1">Elongation factor 4</fullName>
        <shortName evidence="1">EF-4</shortName>
        <ecNumber evidence="1">3.6.5.n1</ecNumber>
    </recommendedName>
    <alternativeName>
        <fullName evidence="1">Ribosomal back-translocase LepA</fullName>
    </alternativeName>
</protein>